<name>EFUG_HORCR</name>
<comment type="function">
    <text evidence="4 7">Cytochrome P450 monooxygenase; part of the gene cluster that mediates the biosynthesis of enfumafungin, a glycosylated fernene-type triterpenoid with potent antifungal activity, mediated by its interaction with beta-1,3-glucan synthase and the fungal cell wall (PubMed:30051576). The pathway begins with the terpene cyclase-glycosyl transferase fusion protein that most likely uses 2,3-oxidosqualene as substrate and catalyzes glycosylation immediately after cyclization (Probable). The fernene glycoside then could be processed by the desaturase efuI which catalyzes isomerization of a double bond established by efuA to form the core structure (Probable). The latter would then undergo a series of hydroxylations in unknown order at C-2, C-19, C-23 and C-25, which would be catalyzed by two of the three cytochrome P450 monooxygenases efuB, efuG or efuH (Probable). The hydroxy-group at C-25 becomes oxidized by the dehydrogenase efuE to enable a spontaneous, non-enzymatic hemiacetal formation with C-23 (Probable). After hydroxylation at C-2, acetylation by the acetyltransferase efuC takes place (Probable). The final steps in enfumafungin biosynthesis require expansion of the 5-membered ring by lactonization via a Baeyer-Villiger reaction mediated by one of the BGC's cytochrome P450 monooxygenases (efuB, efuG or efuH) followed by ring cleavage (Probable). This type of reaction would establish a double bond between C-20 and C-21 which could be reduced by the reductase efuL to form the final product (Probable).</text>
</comment>
<comment type="cofactor">
    <cofactor evidence="1">
        <name>heme</name>
        <dbReference type="ChEBI" id="CHEBI:30413"/>
    </cofactor>
</comment>
<comment type="pathway">
    <text evidence="7">Secondary metabolite biosynthesis; terpenoid biosynthesis.</text>
</comment>
<comment type="subcellular location">
    <subcellularLocation>
        <location evidence="2">Membrane</location>
        <topology evidence="2">Single-pass membrane protein</topology>
    </subcellularLocation>
</comment>
<comment type="similarity">
    <text evidence="6">Belongs to the cytochrome P450 family.</text>
</comment>
<feature type="chain" id="PRO_0000454458" description="Cytochrome P450 monooxygenase efuG">
    <location>
        <begin position="1"/>
        <end position="563"/>
    </location>
</feature>
<feature type="transmembrane region" description="Helical" evidence="2">
    <location>
        <begin position="10"/>
        <end position="30"/>
    </location>
</feature>
<feature type="region of interest" description="Disordered" evidence="3">
    <location>
        <begin position="462"/>
        <end position="482"/>
    </location>
</feature>
<feature type="binding site" description="axial binding residue" evidence="1">
    <location>
        <position position="505"/>
    </location>
    <ligand>
        <name>heme</name>
        <dbReference type="ChEBI" id="CHEBI:30413"/>
    </ligand>
    <ligandPart>
        <name>Fe</name>
        <dbReference type="ChEBI" id="CHEBI:18248"/>
    </ligandPart>
</feature>
<accession>A0A2Z4HPY0</accession>
<evidence type="ECO:0000250" key="1">
    <source>
        <dbReference type="UniProtKB" id="P04798"/>
    </source>
</evidence>
<evidence type="ECO:0000255" key="2"/>
<evidence type="ECO:0000256" key="3">
    <source>
        <dbReference type="SAM" id="MobiDB-lite"/>
    </source>
</evidence>
<evidence type="ECO:0000269" key="4">
    <source>
    </source>
</evidence>
<evidence type="ECO:0000303" key="5">
    <source>
    </source>
</evidence>
<evidence type="ECO:0000305" key="6"/>
<evidence type="ECO:0000305" key="7">
    <source>
    </source>
</evidence>
<dbReference type="EC" id="1.-.-.-" evidence="7"/>
<dbReference type="EMBL" id="MF611889">
    <property type="protein sequence ID" value="AWW17217.1"/>
    <property type="molecule type" value="Genomic_DNA"/>
</dbReference>
<dbReference type="SMR" id="A0A2Z4HPY0"/>
<dbReference type="UniPathway" id="UPA00213"/>
<dbReference type="GO" id="GO:0016020">
    <property type="term" value="C:membrane"/>
    <property type="evidence" value="ECO:0007669"/>
    <property type="project" value="UniProtKB-SubCell"/>
</dbReference>
<dbReference type="GO" id="GO:0020037">
    <property type="term" value="F:heme binding"/>
    <property type="evidence" value="ECO:0007669"/>
    <property type="project" value="InterPro"/>
</dbReference>
<dbReference type="GO" id="GO:0005506">
    <property type="term" value="F:iron ion binding"/>
    <property type="evidence" value="ECO:0007669"/>
    <property type="project" value="InterPro"/>
</dbReference>
<dbReference type="GO" id="GO:0016705">
    <property type="term" value="F:oxidoreductase activity, acting on paired donors, with incorporation or reduction of molecular oxygen"/>
    <property type="evidence" value="ECO:0007669"/>
    <property type="project" value="InterPro"/>
</dbReference>
<dbReference type="GO" id="GO:0008395">
    <property type="term" value="F:steroid hydroxylase activity"/>
    <property type="evidence" value="ECO:0007669"/>
    <property type="project" value="TreeGrafter"/>
</dbReference>
<dbReference type="GO" id="GO:0016114">
    <property type="term" value="P:terpenoid biosynthetic process"/>
    <property type="evidence" value="ECO:0007669"/>
    <property type="project" value="UniProtKB-UniPathway"/>
</dbReference>
<dbReference type="CDD" id="cd11040">
    <property type="entry name" value="CYP7_CYP8-like"/>
    <property type="match status" value="1"/>
</dbReference>
<dbReference type="Gene3D" id="1.10.630.10">
    <property type="entry name" value="Cytochrome P450"/>
    <property type="match status" value="1"/>
</dbReference>
<dbReference type="InterPro" id="IPR050529">
    <property type="entry name" value="CYP450_sterol_14alpha_dmase"/>
</dbReference>
<dbReference type="InterPro" id="IPR001128">
    <property type="entry name" value="Cyt_P450"/>
</dbReference>
<dbReference type="InterPro" id="IPR002403">
    <property type="entry name" value="Cyt_P450_E_grp-IV"/>
</dbReference>
<dbReference type="InterPro" id="IPR036396">
    <property type="entry name" value="Cyt_P450_sf"/>
</dbReference>
<dbReference type="PANTHER" id="PTHR24304:SF2">
    <property type="entry name" value="24-HYDROXYCHOLESTEROL 7-ALPHA-HYDROXYLASE"/>
    <property type="match status" value="1"/>
</dbReference>
<dbReference type="PANTHER" id="PTHR24304">
    <property type="entry name" value="CYTOCHROME P450 FAMILY 7"/>
    <property type="match status" value="1"/>
</dbReference>
<dbReference type="Pfam" id="PF00067">
    <property type="entry name" value="p450"/>
    <property type="match status" value="1"/>
</dbReference>
<dbReference type="PRINTS" id="PR00465">
    <property type="entry name" value="EP450IV"/>
</dbReference>
<dbReference type="SUPFAM" id="SSF48264">
    <property type="entry name" value="Cytochrome P450"/>
    <property type="match status" value="1"/>
</dbReference>
<reference key="1">
    <citation type="journal article" date="2018" name="Environ. Microbiol.">
        <title>Enfumafungin synthase represents a novel lineage of fungal triterpene cyclases.</title>
        <authorList>
            <person name="Kuhnert E."/>
            <person name="Li Y."/>
            <person name="Lan N."/>
            <person name="Yue Q."/>
            <person name="Chen L."/>
            <person name="Cox R.J."/>
            <person name="An Z."/>
            <person name="Yokoyama K."/>
            <person name="Bills G.F."/>
        </authorList>
    </citation>
    <scope>NUCLEOTIDE SEQUENCE [GENOMIC DNA]</scope>
    <scope>FUNCTION</scope>
    <scope>PATHWAY</scope>
</reference>
<sequence length="563" mass="63784">MEFLEYLTPITSHQWGIGSVFLLISIPLIVTRLLTTFWSWRELSAANQKAPGQKRGPTRPTTIPLIGHIVSFLLDGPGFLYNTARYYGRGIPVRVHLATFPSYVISGPELVSAFLKDSTRSLTPMKRSLNYMEHAFGCPHDLVKSFATSDDKDMEQQIHSALQNMLSGPRLGILSERYQQSVKSQVLSVDAGIGDEWVELPDLCTFVETHVFQAATRTIFGPSIVDLNPTLAKDFWNFNKRVKTMFLGIPAWANRTAIRARDDMTEDIKRWQRHAEKNCNIDEIPEDVEWEEYYGSKSTRIRQQLLTKRGITNESARAAENLSMMWATNANSIPAACWFLLQTLHDPLLQARVRKELDAVRIHDTEETNKAAAFKFDITGLTESPLCQSVYAEVLRLGVAAMIVREPTHDNLALGDWKFKKDEFISVPTNNELMDPDFWNSGTPKDPHPLDKFWADRFLVHPDDPQSGPRKDAKKQKAKSDGKPYFSMDGCTWNWIPYGGGAHLCPGRNFAKREIMLTSAIMLTAFDIELLTDTLPKHDKSLFGFGTLPPIGKAPCRIRRRQL</sequence>
<proteinExistence type="inferred from homology"/>
<protein>
    <recommendedName>
        <fullName evidence="5">Cytochrome P450 monooxygenase efuG</fullName>
        <ecNumber evidence="7">1.-.-.-</ecNumber>
    </recommendedName>
    <alternativeName>
        <fullName evidence="5">Enfumafungin biosynthesis cluster protein G</fullName>
    </alternativeName>
</protein>
<keyword id="KW-0349">Heme</keyword>
<keyword id="KW-0408">Iron</keyword>
<keyword id="KW-0472">Membrane</keyword>
<keyword id="KW-0479">Metal-binding</keyword>
<keyword id="KW-0503">Monooxygenase</keyword>
<keyword id="KW-0560">Oxidoreductase</keyword>
<keyword id="KW-0812">Transmembrane</keyword>
<keyword id="KW-1133">Transmembrane helix</keyword>
<gene>
    <name evidence="5" type="primary">efuG</name>
</gene>
<organism>
    <name type="scientific">Hormonema carpetanum</name>
    <dbReference type="NCBI Taxonomy" id="284138"/>
    <lineage>
        <taxon>Eukaryota</taxon>
        <taxon>Fungi</taxon>
        <taxon>Dikarya</taxon>
        <taxon>Ascomycota</taxon>
        <taxon>Pezizomycotina</taxon>
        <taxon>Dothideomycetes</taxon>
        <taxon>Dothideomycetidae</taxon>
        <taxon>Dothideales</taxon>
        <taxon>Dothioraceae</taxon>
        <taxon>Hormonema</taxon>
    </lineage>
</organism>